<reference key="1">
    <citation type="submission" date="2006-03" db="EMBL/GenBank/DDBJ databases">
        <title>Complete sequence of Shewanella denitrificans OS217.</title>
        <authorList>
            <consortium name="US DOE Joint Genome Institute"/>
            <person name="Copeland A."/>
            <person name="Lucas S."/>
            <person name="Lapidus A."/>
            <person name="Barry K."/>
            <person name="Detter J.C."/>
            <person name="Glavina del Rio T."/>
            <person name="Hammon N."/>
            <person name="Israni S."/>
            <person name="Dalin E."/>
            <person name="Tice H."/>
            <person name="Pitluck S."/>
            <person name="Brettin T."/>
            <person name="Bruce D."/>
            <person name="Han C."/>
            <person name="Tapia R."/>
            <person name="Gilna P."/>
            <person name="Kiss H."/>
            <person name="Schmutz J."/>
            <person name="Larimer F."/>
            <person name="Land M."/>
            <person name="Hauser L."/>
            <person name="Kyrpides N."/>
            <person name="Lykidis A."/>
            <person name="Richardson P."/>
        </authorList>
    </citation>
    <scope>NUCLEOTIDE SEQUENCE [LARGE SCALE GENOMIC DNA]</scope>
    <source>
        <strain>OS217 / ATCC BAA-1090 / DSM 15013</strain>
    </source>
</reference>
<evidence type="ECO:0000255" key="1">
    <source>
        <dbReference type="HAMAP-Rule" id="MF_00127"/>
    </source>
</evidence>
<organism>
    <name type="scientific">Shewanella denitrificans (strain OS217 / ATCC BAA-1090 / DSM 15013)</name>
    <dbReference type="NCBI Taxonomy" id="318161"/>
    <lineage>
        <taxon>Bacteria</taxon>
        <taxon>Pseudomonadati</taxon>
        <taxon>Pseudomonadota</taxon>
        <taxon>Gammaproteobacteria</taxon>
        <taxon>Alteromonadales</taxon>
        <taxon>Shewanellaceae</taxon>
        <taxon>Shewanella</taxon>
    </lineage>
</organism>
<dbReference type="EC" id="6.1.1.21" evidence="1"/>
<dbReference type="EMBL" id="CP000302">
    <property type="protein sequence ID" value="ABE54543.1"/>
    <property type="molecule type" value="Genomic_DNA"/>
</dbReference>
<dbReference type="RefSeq" id="WP_011495702.1">
    <property type="nucleotide sequence ID" value="NC_007954.1"/>
</dbReference>
<dbReference type="SMR" id="Q12PT3"/>
<dbReference type="STRING" id="318161.Sden_1257"/>
<dbReference type="KEGG" id="sdn:Sden_1257"/>
<dbReference type="eggNOG" id="COG0124">
    <property type="taxonomic scope" value="Bacteria"/>
</dbReference>
<dbReference type="HOGENOM" id="CLU_025113_1_1_6"/>
<dbReference type="OrthoDB" id="9800814at2"/>
<dbReference type="Proteomes" id="UP000001982">
    <property type="component" value="Chromosome"/>
</dbReference>
<dbReference type="GO" id="GO:0005737">
    <property type="term" value="C:cytoplasm"/>
    <property type="evidence" value="ECO:0007669"/>
    <property type="project" value="UniProtKB-SubCell"/>
</dbReference>
<dbReference type="GO" id="GO:0005524">
    <property type="term" value="F:ATP binding"/>
    <property type="evidence" value="ECO:0007669"/>
    <property type="project" value="UniProtKB-UniRule"/>
</dbReference>
<dbReference type="GO" id="GO:0004821">
    <property type="term" value="F:histidine-tRNA ligase activity"/>
    <property type="evidence" value="ECO:0007669"/>
    <property type="project" value="UniProtKB-UniRule"/>
</dbReference>
<dbReference type="GO" id="GO:0006427">
    <property type="term" value="P:histidyl-tRNA aminoacylation"/>
    <property type="evidence" value="ECO:0007669"/>
    <property type="project" value="UniProtKB-UniRule"/>
</dbReference>
<dbReference type="CDD" id="cd00773">
    <property type="entry name" value="HisRS-like_core"/>
    <property type="match status" value="1"/>
</dbReference>
<dbReference type="CDD" id="cd00859">
    <property type="entry name" value="HisRS_anticodon"/>
    <property type="match status" value="1"/>
</dbReference>
<dbReference type="FunFam" id="3.30.930.10:FF:000005">
    <property type="entry name" value="Histidine--tRNA ligase"/>
    <property type="match status" value="1"/>
</dbReference>
<dbReference type="Gene3D" id="3.40.50.800">
    <property type="entry name" value="Anticodon-binding domain"/>
    <property type="match status" value="1"/>
</dbReference>
<dbReference type="Gene3D" id="3.30.930.10">
    <property type="entry name" value="Bira Bifunctional Protein, Domain 2"/>
    <property type="match status" value="1"/>
</dbReference>
<dbReference type="HAMAP" id="MF_00127">
    <property type="entry name" value="His_tRNA_synth"/>
    <property type="match status" value="1"/>
</dbReference>
<dbReference type="InterPro" id="IPR006195">
    <property type="entry name" value="aa-tRNA-synth_II"/>
</dbReference>
<dbReference type="InterPro" id="IPR045864">
    <property type="entry name" value="aa-tRNA-synth_II/BPL/LPL"/>
</dbReference>
<dbReference type="InterPro" id="IPR004154">
    <property type="entry name" value="Anticodon-bd"/>
</dbReference>
<dbReference type="InterPro" id="IPR036621">
    <property type="entry name" value="Anticodon-bd_dom_sf"/>
</dbReference>
<dbReference type="InterPro" id="IPR015807">
    <property type="entry name" value="His-tRNA-ligase"/>
</dbReference>
<dbReference type="InterPro" id="IPR041715">
    <property type="entry name" value="HisRS-like_core"/>
</dbReference>
<dbReference type="InterPro" id="IPR004516">
    <property type="entry name" value="HisRS/HisZ"/>
</dbReference>
<dbReference type="InterPro" id="IPR033656">
    <property type="entry name" value="HisRS_anticodon"/>
</dbReference>
<dbReference type="NCBIfam" id="TIGR00442">
    <property type="entry name" value="hisS"/>
    <property type="match status" value="1"/>
</dbReference>
<dbReference type="PANTHER" id="PTHR43707:SF1">
    <property type="entry name" value="HISTIDINE--TRNA LIGASE, MITOCHONDRIAL-RELATED"/>
    <property type="match status" value="1"/>
</dbReference>
<dbReference type="PANTHER" id="PTHR43707">
    <property type="entry name" value="HISTIDYL-TRNA SYNTHETASE"/>
    <property type="match status" value="1"/>
</dbReference>
<dbReference type="Pfam" id="PF03129">
    <property type="entry name" value="HGTP_anticodon"/>
    <property type="match status" value="1"/>
</dbReference>
<dbReference type="Pfam" id="PF13393">
    <property type="entry name" value="tRNA-synt_His"/>
    <property type="match status" value="1"/>
</dbReference>
<dbReference type="PIRSF" id="PIRSF001549">
    <property type="entry name" value="His-tRNA_synth"/>
    <property type="match status" value="1"/>
</dbReference>
<dbReference type="SUPFAM" id="SSF52954">
    <property type="entry name" value="Class II aaRS ABD-related"/>
    <property type="match status" value="1"/>
</dbReference>
<dbReference type="SUPFAM" id="SSF55681">
    <property type="entry name" value="Class II aaRS and biotin synthetases"/>
    <property type="match status" value="1"/>
</dbReference>
<dbReference type="PROSITE" id="PS50862">
    <property type="entry name" value="AA_TRNA_LIGASE_II"/>
    <property type="match status" value="1"/>
</dbReference>
<keyword id="KW-0030">Aminoacyl-tRNA synthetase</keyword>
<keyword id="KW-0067">ATP-binding</keyword>
<keyword id="KW-0963">Cytoplasm</keyword>
<keyword id="KW-0436">Ligase</keyword>
<keyword id="KW-0547">Nucleotide-binding</keyword>
<keyword id="KW-0648">Protein biosynthesis</keyword>
<keyword id="KW-1185">Reference proteome</keyword>
<protein>
    <recommendedName>
        <fullName evidence="1">Histidine--tRNA ligase</fullName>
        <ecNumber evidence="1">6.1.1.21</ecNumber>
    </recommendedName>
    <alternativeName>
        <fullName evidence="1">Histidyl-tRNA synthetase</fullName>
        <shortName evidence="1">HisRS</shortName>
    </alternativeName>
</protein>
<name>SYH_SHEDO</name>
<comment type="catalytic activity">
    <reaction evidence="1">
        <text>tRNA(His) + L-histidine + ATP = L-histidyl-tRNA(His) + AMP + diphosphate + H(+)</text>
        <dbReference type="Rhea" id="RHEA:17313"/>
        <dbReference type="Rhea" id="RHEA-COMP:9665"/>
        <dbReference type="Rhea" id="RHEA-COMP:9689"/>
        <dbReference type="ChEBI" id="CHEBI:15378"/>
        <dbReference type="ChEBI" id="CHEBI:30616"/>
        <dbReference type="ChEBI" id="CHEBI:33019"/>
        <dbReference type="ChEBI" id="CHEBI:57595"/>
        <dbReference type="ChEBI" id="CHEBI:78442"/>
        <dbReference type="ChEBI" id="CHEBI:78527"/>
        <dbReference type="ChEBI" id="CHEBI:456215"/>
        <dbReference type="EC" id="6.1.1.21"/>
    </reaction>
</comment>
<comment type="subunit">
    <text evidence="1">Homodimer.</text>
</comment>
<comment type="subcellular location">
    <subcellularLocation>
        <location evidence="1">Cytoplasm</location>
    </subcellularLocation>
</comment>
<comment type="similarity">
    <text evidence="1">Belongs to the class-II aminoacyl-tRNA synthetase family.</text>
</comment>
<sequence>MAKQIQAIRGMNDILPTQSPLWQKVEAVLRSSVSAYGYSEIRTPIVESTDLFKRSIGEVTDIVEKEMYTFEDRNSDSLTLRPEGTASTVRAGNEHGLLYNQEQRLWYMGPMFRHERPQKGRYRQFHQFGVEVYGIGTADIDAEVLMLSARLWQQLGIDEHVSLELNTLGDPSERAAYRDALIAFLEQHKDKLDEDSQRRMYSNPLRVLDTKDSQVQALLADAPALMDYLGEESKTHFSTLCELLDAVGIQYRVNPRLVRGLDYYNRTVFEWVTTSLGSQGTVLAGGRYDGLVGQLGGKDTPAVGFAMGLERIVLLLETLGLNQDIAPEVDVYVTAMGDSCLVEAFKVAQELRQALPGLKVMSHCGGGNVKKQMKRADKSGAAYAIIIGENELANNQVAIKPLRNNNQQELVARDALAETISALI</sequence>
<accession>Q12PT3</accession>
<proteinExistence type="inferred from homology"/>
<feature type="chain" id="PRO_1000016445" description="Histidine--tRNA ligase">
    <location>
        <begin position="1"/>
        <end position="424"/>
    </location>
</feature>
<gene>
    <name evidence="1" type="primary">hisS</name>
    <name type="ordered locus">Sden_1257</name>
</gene>